<dbReference type="EMBL" id="CP000720">
    <property type="protein sequence ID" value="ABS48388.1"/>
    <property type="molecule type" value="Genomic_DNA"/>
</dbReference>
<dbReference type="RefSeq" id="WP_002220760.1">
    <property type="nucleotide sequence ID" value="NC_009708.1"/>
</dbReference>
<dbReference type="SMR" id="A7FPE3"/>
<dbReference type="GeneID" id="57974600"/>
<dbReference type="KEGG" id="ypi:YpsIP31758_4179"/>
<dbReference type="HOGENOM" id="CLU_085114_3_0_6"/>
<dbReference type="Proteomes" id="UP000002412">
    <property type="component" value="Chromosome"/>
</dbReference>
<dbReference type="GO" id="GO:0005886">
    <property type="term" value="C:plasma membrane"/>
    <property type="evidence" value="ECO:0007669"/>
    <property type="project" value="UniProtKB-SubCell"/>
</dbReference>
<dbReference type="GO" id="GO:0045259">
    <property type="term" value="C:proton-transporting ATP synthase complex"/>
    <property type="evidence" value="ECO:0007669"/>
    <property type="project" value="UniProtKB-KW"/>
</dbReference>
<dbReference type="GO" id="GO:0046933">
    <property type="term" value="F:proton-transporting ATP synthase activity, rotational mechanism"/>
    <property type="evidence" value="ECO:0007669"/>
    <property type="project" value="UniProtKB-UniRule"/>
</dbReference>
<dbReference type="FunFam" id="1.10.520.20:FF:000001">
    <property type="entry name" value="ATP synthase subunit delta"/>
    <property type="match status" value="1"/>
</dbReference>
<dbReference type="Gene3D" id="1.10.520.20">
    <property type="entry name" value="N-terminal domain of the delta subunit of the F1F0-ATP synthase"/>
    <property type="match status" value="1"/>
</dbReference>
<dbReference type="HAMAP" id="MF_01416">
    <property type="entry name" value="ATP_synth_delta_bact"/>
    <property type="match status" value="1"/>
</dbReference>
<dbReference type="InterPro" id="IPR026015">
    <property type="entry name" value="ATP_synth_OSCP/delta_N_sf"/>
</dbReference>
<dbReference type="InterPro" id="IPR020781">
    <property type="entry name" value="ATPase_OSCP/d_CS"/>
</dbReference>
<dbReference type="InterPro" id="IPR000711">
    <property type="entry name" value="ATPase_OSCP/dsu"/>
</dbReference>
<dbReference type="NCBIfam" id="TIGR01145">
    <property type="entry name" value="ATP_synt_delta"/>
    <property type="match status" value="1"/>
</dbReference>
<dbReference type="NCBIfam" id="NF004402">
    <property type="entry name" value="PRK05758.2-2"/>
    <property type="match status" value="1"/>
</dbReference>
<dbReference type="NCBIfam" id="NF004404">
    <property type="entry name" value="PRK05758.2-5"/>
    <property type="match status" value="1"/>
</dbReference>
<dbReference type="PANTHER" id="PTHR11910">
    <property type="entry name" value="ATP SYNTHASE DELTA CHAIN"/>
    <property type="match status" value="1"/>
</dbReference>
<dbReference type="Pfam" id="PF00213">
    <property type="entry name" value="OSCP"/>
    <property type="match status" value="1"/>
</dbReference>
<dbReference type="PRINTS" id="PR00125">
    <property type="entry name" value="ATPASEDELTA"/>
</dbReference>
<dbReference type="SUPFAM" id="SSF47928">
    <property type="entry name" value="N-terminal domain of the delta subunit of the F1F0-ATP synthase"/>
    <property type="match status" value="1"/>
</dbReference>
<dbReference type="PROSITE" id="PS00389">
    <property type="entry name" value="ATPASE_DELTA"/>
    <property type="match status" value="1"/>
</dbReference>
<proteinExistence type="inferred from homology"/>
<feature type="chain" id="PRO_0000371207" description="ATP synthase subunit delta">
    <location>
        <begin position="1"/>
        <end position="177"/>
    </location>
</feature>
<sequence>MSEFVTVARPYAKAAFDFAVEHQAVERWQNMLAFTAQVTRNEQIAELLSGAVAPETMSTTFIAVCGDQLDEPAQNFIRVMAENGRLLVLPEVLQQFIQLRASLESTVDVEVSSARALNDEQLAKIAAAMEKRLSRKVKLNCKIDKSVMAGVVIRAGDMVIDGSVRGRLERLADVLQS</sequence>
<accession>A7FPE3</accession>
<protein>
    <recommendedName>
        <fullName evidence="1">ATP synthase subunit delta</fullName>
    </recommendedName>
    <alternativeName>
        <fullName evidence="1">ATP synthase F(1) sector subunit delta</fullName>
    </alternativeName>
    <alternativeName>
        <fullName evidence="1">F-type ATPase subunit delta</fullName>
        <shortName evidence="1">F-ATPase subunit delta</shortName>
    </alternativeName>
</protein>
<name>ATPD_YERP3</name>
<comment type="function">
    <text evidence="1">F(1)F(0) ATP synthase produces ATP from ADP in the presence of a proton or sodium gradient. F-type ATPases consist of two structural domains, F(1) containing the extramembraneous catalytic core and F(0) containing the membrane proton channel, linked together by a central stalk and a peripheral stalk. During catalysis, ATP synthesis in the catalytic domain of F(1) is coupled via a rotary mechanism of the central stalk subunits to proton translocation.</text>
</comment>
<comment type="function">
    <text evidence="1">This protein is part of the stalk that links CF(0) to CF(1). It either transmits conformational changes from CF(0) to CF(1) or is implicated in proton conduction.</text>
</comment>
<comment type="subunit">
    <text evidence="1">F-type ATPases have 2 components, F(1) - the catalytic core - and F(0) - the membrane proton channel. F(1) has five subunits: alpha(3), beta(3), gamma(1), delta(1), epsilon(1). F(0) has three main subunits: a(1), b(2) and c(10-14). The alpha and beta chains form an alternating ring which encloses part of the gamma chain. F(1) is attached to F(0) by a central stalk formed by the gamma and epsilon chains, while a peripheral stalk is formed by the delta and b chains.</text>
</comment>
<comment type="subcellular location">
    <subcellularLocation>
        <location evidence="1">Cell inner membrane</location>
        <topology evidence="1">Peripheral membrane protein</topology>
    </subcellularLocation>
</comment>
<comment type="similarity">
    <text evidence="1">Belongs to the ATPase delta chain family.</text>
</comment>
<reference key="1">
    <citation type="journal article" date="2007" name="PLoS Genet.">
        <title>The complete genome sequence of Yersinia pseudotuberculosis IP31758, the causative agent of Far East scarlet-like fever.</title>
        <authorList>
            <person name="Eppinger M."/>
            <person name="Rosovitz M.J."/>
            <person name="Fricke W.F."/>
            <person name="Rasko D.A."/>
            <person name="Kokorina G."/>
            <person name="Fayolle C."/>
            <person name="Lindler L.E."/>
            <person name="Carniel E."/>
            <person name="Ravel J."/>
        </authorList>
    </citation>
    <scope>NUCLEOTIDE SEQUENCE [LARGE SCALE GENOMIC DNA]</scope>
    <source>
        <strain>IP 31758</strain>
    </source>
</reference>
<keyword id="KW-0066">ATP synthesis</keyword>
<keyword id="KW-0997">Cell inner membrane</keyword>
<keyword id="KW-1003">Cell membrane</keyword>
<keyword id="KW-0139">CF(1)</keyword>
<keyword id="KW-0375">Hydrogen ion transport</keyword>
<keyword id="KW-0406">Ion transport</keyword>
<keyword id="KW-0472">Membrane</keyword>
<keyword id="KW-0813">Transport</keyword>
<gene>
    <name evidence="1" type="primary">atpH</name>
    <name type="ordered locus">YpsIP31758_4179</name>
</gene>
<organism>
    <name type="scientific">Yersinia pseudotuberculosis serotype O:1b (strain IP 31758)</name>
    <dbReference type="NCBI Taxonomy" id="349747"/>
    <lineage>
        <taxon>Bacteria</taxon>
        <taxon>Pseudomonadati</taxon>
        <taxon>Pseudomonadota</taxon>
        <taxon>Gammaproteobacteria</taxon>
        <taxon>Enterobacterales</taxon>
        <taxon>Yersiniaceae</taxon>
        <taxon>Yersinia</taxon>
    </lineage>
</organism>
<evidence type="ECO:0000255" key="1">
    <source>
        <dbReference type="HAMAP-Rule" id="MF_01416"/>
    </source>
</evidence>